<gene>
    <name evidence="1" type="primary">maeA</name>
    <name type="ordered locus">SSON_1645</name>
</gene>
<proteinExistence type="inferred from homology"/>
<protein>
    <recommendedName>
        <fullName evidence="1">NAD-dependent malic enzyme</fullName>
        <shortName evidence="1">NAD-ME</shortName>
        <ecNumber evidence="1">1.1.1.38</ecNumber>
    </recommendedName>
</protein>
<dbReference type="EC" id="1.1.1.38" evidence="1"/>
<dbReference type="EMBL" id="CP000038">
    <property type="protein sequence ID" value="AAZ88340.1"/>
    <property type="status" value="ALT_INIT"/>
    <property type="molecule type" value="Genomic_DNA"/>
</dbReference>
<dbReference type="RefSeq" id="WP_011310213.1">
    <property type="nucleotide sequence ID" value="NC_007384.1"/>
</dbReference>
<dbReference type="SMR" id="Q3Z1M2"/>
<dbReference type="KEGG" id="ssn:SSON_1645"/>
<dbReference type="HOGENOM" id="CLU_011405_5_2_6"/>
<dbReference type="Proteomes" id="UP000002529">
    <property type="component" value="Chromosome"/>
</dbReference>
<dbReference type="GO" id="GO:0005829">
    <property type="term" value="C:cytosol"/>
    <property type="evidence" value="ECO:0007669"/>
    <property type="project" value="TreeGrafter"/>
</dbReference>
<dbReference type="GO" id="GO:0004471">
    <property type="term" value="F:malate dehydrogenase (decarboxylating) (NAD+) activity"/>
    <property type="evidence" value="ECO:0007669"/>
    <property type="project" value="UniProtKB-UniRule"/>
</dbReference>
<dbReference type="GO" id="GO:0046872">
    <property type="term" value="F:metal ion binding"/>
    <property type="evidence" value="ECO:0007669"/>
    <property type="project" value="UniProtKB-KW"/>
</dbReference>
<dbReference type="GO" id="GO:0051287">
    <property type="term" value="F:NAD binding"/>
    <property type="evidence" value="ECO:0007669"/>
    <property type="project" value="InterPro"/>
</dbReference>
<dbReference type="GO" id="GO:0008948">
    <property type="term" value="F:oxaloacetate decarboxylase activity"/>
    <property type="evidence" value="ECO:0007669"/>
    <property type="project" value="UniProtKB-UniRule"/>
</dbReference>
<dbReference type="GO" id="GO:0006108">
    <property type="term" value="P:malate metabolic process"/>
    <property type="evidence" value="ECO:0007669"/>
    <property type="project" value="TreeGrafter"/>
</dbReference>
<dbReference type="CDD" id="cd05312">
    <property type="entry name" value="NAD_bind_1_malic_enz"/>
    <property type="match status" value="1"/>
</dbReference>
<dbReference type="FunFam" id="3.40.50.10380:FF:000001">
    <property type="entry name" value="NAD-dependent malic enzyme"/>
    <property type="match status" value="1"/>
</dbReference>
<dbReference type="FunFam" id="3.40.50.720:FF:000055">
    <property type="entry name" value="NAD-dependent malic enzyme"/>
    <property type="match status" value="1"/>
</dbReference>
<dbReference type="Gene3D" id="3.40.50.10380">
    <property type="entry name" value="Malic enzyme, N-terminal domain"/>
    <property type="match status" value="1"/>
</dbReference>
<dbReference type="Gene3D" id="3.40.50.720">
    <property type="entry name" value="NAD(P)-binding Rossmann-like Domain"/>
    <property type="match status" value="1"/>
</dbReference>
<dbReference type="HAMAP" id="MF_01619">
    <property type="entry name" value="NAD_malic_enz"/>
    <property type="match status" value="1"/>
</dbReference>
<dbReference type="InterPro" id="IPR046346">
    <property type="entry name" value="Aminoacid_DH-like_N_sf"/>
</dbReference>
<dbReference type="InterPro" id="IPR015884">
    <property type="entry name" value="Malic_enzyme_CS"/>
</dbReference>
<dbReference type="InterPro" id="IPR012301">
    <property type="entry name" value="Malic_N_dom"/>
</dbReference>
<dbReference type="InterPro" id="IPR037062">
    <property type="entry name" value="Malic_N_dom_sf"/>
</dbReference>
<dbReference type="InterPro" id="IPR012302">
    <property type="entry name" value="Malic_NAD-bd"/>
</dbReference>
<dbReference type="InterPro" id="IPR001891">
    <property type="entry name" value="Malic_OxRdtase"/>
</dbReference>
<dbReference type="InterPro" id="IPR036291">
    <property type="entry name" value="NAD(P)-bd_dom_sf"/>
</dbReference>
<dbReference type="InterPro" id="IPR023667">
    <property type="entry name" value="NAD_malic_enz_proteobac"/>
</dbReference>
<dbReference type="NCBIfam" id="NF010052">
    <property type="entry name" value="PRK13529.1"/>
    <property type="match status" value="1"/>
</dbReference>
<dbReference type="PANTHER" id="PTHR23406">
    <property type="entry name" value="MALIC ENZYME-RELATED"/>
    <property type="match status" value="1"/>
</dbReference>
<dbReference type="PANTHER" id="PTHR23406:SF34">
    <property type="entry name" value="NAD-DEPENDENT MALIC ENZYME, MITOCHONDRIAL"/>
    <property type="match status" value="1"/>
</dbReference>
<dbReference type="Pfam" id="PF00390">
    <property type="entry name" value="malic"/>
    <property type="match status" value="1"/>
</dbReference>
<dbReference type="Pfam" id="PF03949">
    <property type="entry name" value="Malic_M"/>
    <property type="match status" value="1"/>
</dbReference>
<dbReference type="PIRSF" id="PIRSF000106">
    <property type="entry name" value="ME"/>
    <property type="match status" value="1"/>
</dbReference>
<dbReference type="PRINTS" id="PR00072">
    <property type="entry name" value="MALOXRDTASE"/>
</dbReference>
<dbReference type="SMART" id="SM01274">
    <property type="entry name" value="malic"/>
    <property type="match status" value="1"/>
</dbReference>
<dbReference type="SMART" id="SM00919">
    <property type="entry name" value="Malic_M"/>
    <property type="match status" value="1"/>
</dbReference>
<dbReference type="SUPFAM" id="SSF53223">
    <property type="entry name" value="Aminoacid dehydrogenase-like, N-terminal domain"/>
    <property type="match status" value="1"/>
</dbReference>
<dbReference type="SUPFAM" id="SSF51735">
    <property type="entry name" value="NAD(P)-binding Rossmann-fold domains"/>
    <property type="match status" value="1"/>
</dbReference>
<dbReference type="PROSITE" id="PS00331">
    <property type="entry name" value="MALIC_ENZYMES"/>
    <property type="match status" value="1"/>
</dbReference>
<organism>
    <name type="scientific">Shigella sonnei (strain Ss046)</name>
    <dbReference type="NCBI Taxonomy" id="300269"/>
    <lineage>
        <taxon>Bacteria</taxon>
        <taxon>Pseudomonadati</taxon>
        <taxon>Pseudomonadota</taxon>
        <taxon>Gammaproteobacteria</taxon>
        <taxon>Enterobacterales</taxon>
        <taxon>Enterobacteriaceae</taxon>
        <taxon>Shigella</taxon>
    </lineage>
</organism>
<feature type="chain" id="PRO_0000323540" description="NAD-dependent malic enzyme">
    <location>
        <begin position="1"/>
        <end position="565"/>
    </location>
</feature>
<feature type="active site" description="Proton donor" evidence="1">
    <location>
        <position position="104"/>
    </location>
</feature>
<feature type="active site" description="Proton acceptor" evidence="1">
    <location>
        <position position="175"/>
    </location>
</feature>
<feature type="binding site" evidence="1">
    <location>
        <position position="157"/>
    </location>
    <ligand>
        <name>NAD(+)</name>
        <dbReference type="ChEBI" id="CHEBI:57540"/>
    </ligand>
</feature>
<feature type="binding site" evidence="1">
    <location>
        <position position="246"/>
    </location>
    <ligand>
        <name>a divalent metal cation</name>
        <dbReference type="ChEBI" id="CHEBI:60240"/>
    </ligand>
</feature>
<feature type="binding site" evidence="1">
    <location>
        <position position="247"/>
    </location>
    <ligand>
        <name>a divalent metal cation</name>
        <dbReference type="ChEBI" id="CHEBI:60240"/>
    </ligand>
</feature>
<feature type="binding site" evidence="1">
    <location>
        <position position="270"/>
    </location>
    <ligand>
        <name>a divalent metal cation</name>
        <dbReference type="ChEBI" id="CHEBI:60240"/>
    </ligand>
</feature>
<feature type="binding site" evidence="1">
    <location>
        <position position="270"/>
    </location>
    <ligand>
        <name>NAD(+)</name>
        <dbReference type="ChEBI" id="CHEBI:57540"/>
    </ligand>
</feature>
<feature type="binding site" evidence="1">
    <location>
        <position position="418"/>
    </location>
    <ligand>
        <name>NAD(+)</name>
        <dbReference type="ChEBI" id="CHEBI:57540"/>
    </ligand>
</feature>
<feature type="site" description="Important for activity" evidence="1">
    <location>
        <position position="270"/>
    </location>
</feature>
<sequence length="565" mass="63132">MEPKTKKQRSLYIPYAGPVLLEFPLLNKGSAFSMEERRNFNLLGLLPEVVETIEEQAERAWIQYQGFKTEIDKHIYLRNIQDTNETLFYRLVNNHLDEMMPVIYTPTVGAACERFSEIYRRSRGVFISYQNRHNMDDILQNVPNHNIKVIVVTDGERILGLGDQGIGGMGIPIGKLSLYTACGGISPAYTLPVVLDVGTNNQQLLNDPLYMGWRNPRITDDEYYEFVDEFIQAVKQRWPDVLLQFEDFAQKNAMPLLNRYRNEICSFNDDIQGTAAVTVGTLIAASRAAGGQLSEKKIVFLGAGSAGCGIAEMIIAQTPREGLSEEAARQKVFMVDRFGLLTDKMPNLLPFQTKLVQKRENLSDWDTDSDVLSLLDVVRNVKPDILIGVSGQTGLFTEEIIREMHKHCPRPIVMPLSNPTSRVEATPQDIIAWTEGNALVATGSPFNPVVWKDKIYPIAQCNNAFIFPGIGLGVIASGASRITDEMLMSASETLAQYSPLVLNGEGLVLPELKDIQKVSRAIAFAVGKMAQQQGVAVKTSAEALQQAIDDNFWQAEYRDYRRTSI</sequence>
<accession>Q3Z1M2</accession>
<comment type="catalytic activity">
    <reaction evidence="1">
        <text>(S)-malate + NAD(+) = pyruvate + CO2 + NADH</text>
        <dbReference type="Rhea" id="RHEA:12653"/>
        <dbReference type="ChEBI" id="CHEBI:15361"/>
        <dbReference type="ChEBI" id="CHEBI:15589"/>
        <dbReference type="ChEBI" id="CHEBI:16526"/>
        <dbReference type="ChEBI" id="CHEBI:57540"/>
        <dbReference type="ChEBI" id="CHEBI:57945"/>
        <dbReference type="EC" id="1.1.1.38"/>
    </reaction>
</comment>
<comment type="catalytic activity">
    <reaction evidence="1">
        <text>oxaloacetate + H(+) = pyruvate + CO2</text>
        <dbReference type="Rhea" id="RHEA:15641"/>
        <dbReference type="ChEBI" id="CHEBI:15361"/>
        <dbReference type="ChEBI" id="CHEBI:15378"/>
        <dbReference type="ChEBI" id="CHEBI:16452"/>
        <dbReference type="ChEBI" id="CHEBI:16526"/>
        <dbReference type="EC" id="1.1.1.38"/>
    </reaction>
</comment>
<comment type="cofactor">
    <cofactor evidence="1">
        <name>Mg(2+)</name>
        <dbReference type="ChEBI" id="CHEBI:18420"/>
    </cofactor>
    <cofactor evidence="1">
        <name>Mn(2+)</name>
        <dbReference type="ChEBI" id="CHEBI:29035"/>
    </cofactor>
    <text evidence="1">Divalent metal cations. Prefers magnesium or manganese.</text>
</comment>
<comment type="subunit">
    <text evidence="1">Homotetramer.</text>
</comment>
<comment type="similarity">
    <text evidence="1">Belongs to the malic enzymes family.</text>
</comment>
<comment type="sequence caution" evidence="2">
    <conflict type="erroneous initiation">
        <sequence resource="EMBL-CDS" id="AAZ88340"/>
    </conflict>
</comment>
<evidence type="ECO:0000255" key="1">
    <source>
        <dbReference type="HAMAP-Rule" id="MF_01619"/>
    </source>
</evidence>
<evidence type="ECO:0000305" key="2"/>
<name>MAO1_SHISS</name>
<reference key="1">
    <citation type="journal article" date="2005" name="Nucleic Acids Res.">
        <title>Genome dynamics and diversity of Shigella species, the etiologic agents of bacillary dysentery.</title>
        <authorList>
            <person name="Yang F."/>
            <person name="Yang J."/>
            <person name="Zhang X."/>
            <person name="Chen L."/>
            <person name="Jiang Y."/>
            <person name="Yan Y."/>
            <person name="Tang X."/>
            <person name="Wang J."/>
            <person name="Xiong Z."/>
            <person name="Dong J."/>
            <person name="Xue Y."/>
            <person name="Zhu Y."/>
            <person name="Xu X."/>
            <person name="Sun L."/>
            <person name="Chen S."/>
            <person name="Nie H."/>
            <person name="Peng J."/>
            <person name="Xu J."/>
            <person name="Wang Y."/>
            <person name="Yuan Z."/>
            <person name="Wen Y."/>
            <person name="Yao Z."/>
            <person name="Shen Y."/>
            <person name="Qiang B."/>
            <person name="Hou Y."/>
            <person name="Yu J."/>
            <person name="Jin Q."/>
        </authorList>
    </citation>
    <scope>NUCLEOTIDE SEQUENCE [LARGE SCALE GENOMIC DNA]</scope>
    <source>
        <strain>Ss046</strain>
    </source>
</reference>
<keyword id="KW-0479">Metal-binding</keyword>
<keyword id="KW-0520">NAD</keyword>
<keyword id="KW-0560">Oxidoreductase</keyword>
<keyword id="KW-1185">Reference proteome</keyword>